<comment type="function">
    <text evidence="1">The AROM polypeptide catalyzes 5 consecutive enzymatic reactions in prechorismate polyaromatic amino acid biosynthesis.</text>
</comment>
<comment type="catalytic activity">
    <reaction evidence="1">
        <text>7-phospho-2-dehydro-3-deoxy-D-arabino-heptonate = 3-dehydroquinate + phosphate</text>
        <dbReference type="Rhea" id="RHEA:21968"/>
        <dbReference type="ChEBI" id="CHEBI:32364"/>
        <dbReference type="ChEBI" id="CHEBI:43474"/>
        <dbReference type="ChEBI" id="CHEBI:58394"/>
        <dbReference type="EC" id="4.2.3.4"/>
    </reaction>
</comment>
<comment type="catalytic activity">
    <reaction evidence="1">
        <text>3-dehydroquinate = 3-dehydroshikimate + H2O</text>
        <dbReference type="Rhea" id="RHEA:21096"/>
        <dbReference type="ChEBI" id="CHEBI:15377"/>
        <dbReference type="ChEBI" id="CHEBI:16630"/>
        <dbReference type="ChEBI" id="CHEBI:32364"/>
        <dbReference type="EC" id="4.2.1.10"/>
    </reaction>
</comment>
<comment type="catalytic activity">
    <reaction evidence="1">
        <text>shikimate + NADP(+) = 3-dehydroshikimate + NADPH + H(+)</text>
        <dbReference type="Rhea" id="RHEA:17737"/>
        <dbReference type="ChEBI" id="CHEBI:15378"/>
        <dbReference type="ChEBI" id="CHEBI:16630"/>
        <dbReference type="ChEBI" id="CHEBI:36208"/>
        <dbReference type="ChEBI" id="CHEBI:57783"/>
        <dbReference type="ChEBI" id="CHEBI:58349"/>
        <dbReference type="EC" id="1.1.1.25"/>
    </reaction>
</comment>
<comment type="catalytic activity">
    <reaction evidence="1">
        <text>shikimate + ATP = 3-phosphoshikimate + ADP + H(+)</text>
        <dbReference type="Rhea" id="RHEA:13121"/>
        <dbReference type="ChEBI" id="CHEBI:15378"/>
        <dbReference type="ChEBI" id="CHEBI:30616"/>
        <dbReference type="ChEBI" id="CHEBI:36208"/>
        <dbReference type="ChEBI" id="CHEBI:145989"/>
        <dbReference type="ChEBI" id="CHEBI:456216"/>
        <dbReference type="EC" id="2.7.1.71"/>
    </reaction>
</comment>
<comment type="catalytic activity">
    <reaction evidence="1">
        <text>3-phosphoshikimate + phosphoenolpyruvate = 5-O-(1-carboxyvinyl)-3-phosphoshikimate + phosphate</text>
        <dbReference type="Rhea" id="RHEA:21256"/>
        <dbReference type="ChEBI" id="CHEBI:43474"/>
        <dbReference type="ChEBI" id="CHEBI:57701"/>
        <dbReference type="ChEBI" id="CHEBI:58702"/>
        <dbReference type="ChEBI" id="CHEBI:145989"/>
        <dbReference type="EC" id="2.5.1.19"/>
    </reaction>
</comment>
<comment type="cofactor">
    <cofactor>
        <name>Zn(2+)</name>
        <dbReference type="ChEBI" id="CHEBI:29105"/>
    </cofactor>
    <text>Binds 2 Zn(2+) ions per subunit.</text>
</comment>
<comment type="pathway">
    <text evidence="1">Metabolic intermediate biosynthesis; chorismate biosynthesis; chorismate from D-erythrose 4-phosphate and phosphoenolpyruvate: step 2/7.</text>
</comment>
<comment type="pathway">
    <text evidence="1">Metabolic intermediate biosynthesis; chorismate biosynthesis; chorismate from D-erythrose 4-phosphate and phosphoenolpyruvate: step 3/7.</text>
</comment>
<comment type="pathway">
    <text evidence="1">Metabolic intermediate biosynthesis; chorismate biosynthesis; chorismate from D-erythrose 4-phosphate and phosphoenolpyruvate: step 4/7.</text>
</comment>
<comment type="pathway">
    <text evidence="1">Metabolic intermediate biosynthesis; chorismate biosynthesis; chorismate from D-erythrose 4-phosphate and phosphoenolpyruvate: step 5/7.</text>
</comment>
<comment type="pathway">
    <text evidence="1">Metabolic intermediate biosynthesis; chorismate biosynthesis; chorismate from D-erythrose 4-phosphate and phosphoenolpyruvate: step 6/7.</text>
</comment>
<comment type="subunit">
    <text evidence="1">Homodimer.</text>
</comment>
<comment type="subcellular location">
    <subcellularLocation>
        <location evidence="1">Cytoplasm</location>
    </subcellularLocation>
</comment>
<comment type="similarity">
    <text evidence="1">In the N-terminal section; belongs to the sugar phosphate cyclases superfamily. Dehydroquinate synthase family.</text>
</comment>
<comment type="similarity">
    <text evidence="1">In the 2nd section; belongs to the EPSP synthase family.</text>
</comment>
<comment type="similarity">
    <text evidence="1">In the 3rd section; belongs to the shikimate kinase family.</text>
</comment>
<comment type="similarity">
    <text evidence="1">In the 4th section; belongs to the type-I 3-dehydroquinase family.</text>
</comment>
<comment type="similarity">
    <text evidence="1">In the C-terminal section; belongs to the shikimate dehydrogenase family.</text>
</comment>
<name>ARO1_KLULA</name>
<protein>
    <recommendedName>
        <fullName evidence="1">Pentafunctional AROM polypeptide</fullName>
    </recommendedName>
    <domain>
        <recommendedName>
            <fullName evidence="1">3-dehydroquinate synthase</fullName>
            <shortName evidence="1">DHQS</shortName>
            <ecNumber evidence="1">4.2.3.4</ecNumber>
        </recommendedName>
    </domain>
    <domain>
        <recommendedName>
            <fullName evidence="1">3-phosphoshikimate 1-carboxyvinyltransferase</fullName>
            <ecNumber evidence="1">2.5.1.19</ecNumber>
        </recommendedName>
        <alternativeName>
            <fullName evidence="1">5-enolpyruvylshikimate-3-phosphate synthase</fullName>
            <shortName evidence="1">EPSP synthase</shortName>
            <shortName evidence="1">EPSPS</shortName>
        </alternativeName>
    </domain>
    <domain>
        <recommendedName>
            <fullName evidence="1">Shikimate kinase</fullName>
            <shortName evidence="1">SK</shortName>
            <ecNumber evidence="1">2.7.1.71</ecNumber>
        </recommendedName>
    </domain>
    <domain>
        <recommendedName>
            <fullName evidence="1">3-dehydroquinate dehydratase</fullName>
            <shortName evidence="1">3-dehydroquinase</shortName>
            <ecNumber evidence="1">4.2.1.10</ecNumber>
        </recommendedName>
    </domain>
    <domain>
        <recommendedName>
            <fullName evidence="1">Shikimate dehydrogenase</fullName>
            <ecNumber evidence="1">1.1.1.25</ecNumber>
        </recommendedName>
    </domain>
</protein>
<organism>
    <name type="scientific">Kluyveromyces lactis (strain ATCC 8585 / CBS 2359 / DSM 70799 / NBRC 1267 / NRRL Y-1140 / WM37)</name>
    <name type="common">Yeast</name>
    <name type="synonym">Candida sphaerica</name>
    <dbReference type="NCBI Taxonomy" id="284590"/>
    <lineage>
        <taxon>Eukaryota</taxon>
        <taxon>Fungi</taxon>
        <taxon>Dikarya</taxon>
        <taxon>Ascomycota</taxon>
        <taxon>Saccharomycotina</taxon>
        <taxon>Saccharomycetes</taxon>
        <taxon>Saccharomycetales</taxon>
        <taxon>Saccharomycetaceae</taxon>
        <taxon>Kluyveromyces</taxon>
    </lineage>
</organism>
<accession>Q6CJC4</accession>
<dbReference type="EC" id="4.2.3.4" evidence="1"/>
<dbReference type="EC" id="2.5.1.19" evidence="1"/>
<dbReference type="EC" id="2.7.1.71" evidence="1"/>
<dbReference type="EC" id="4.2.1.10" evidence="1"/>
<dbReference type="EC" id="1.1.1.25" evidence="1"/>
<dbReference type="EMBL" id="CR382126">
    <property type="protein sequence ID" value="CAG98673.1"/>
    <property type="molecule type" value="Genomic_DNA"/>
</dbReference>
<dbReference type="RefSeq" id="XP_455965.1">
    <property type="nucleotide sequence ID" value="XM_455965.1"/>
</dbReference>
<dbReference type="SMR" id="Q6CJC4"/>
<dbReference type="FunCoup" id="Q6CJC4">
    <property type="interactions" value="524"/>
</dbReference>
<dbReference type="STRING" id="284590.Q6CJC4"/>
<dbReference type="PaxDb" id="284590-Q6CJC4"/>
<dbReference type="KEGG" id="kla:KLLA0_F19712g"/>
<dbReference type="eggNOG" id="KOG0692">
    <property type="taxonomic scope" value="Eukaryota"/>
</dbReference>
<dbReference type="HOGENOM" id="CLU_001201_1_2_1"/>
<dbReference type="InParanoid" id="Q6CJC4"/>
<dbReference type="OMA" id="SWANMSW"/>
<dbReference type="UniPathway" id="UPA00053">
    <property type="reaction ID" value="UER00085"/>
</dbReference>
<dbReference type="UniPathway" id="UPA00053">
    <property type="reaction ID" value="UER00086"/>
</dbReference>
<dbReference type="UniPathway" id="UPA00053">
    <property type="reaction ID" value="UER00087"/>
</dbReference>
<dbReference type="UniPathway" id="UPA00053">
    <property type="reaction ID" value="UER00088"/>
</dbReference>
<dbReference type="UniPathway" id="UPA00053">
    <property type="reaction ID" value="UER00089"/>
</dbReference>
<dbReference type="Proteomes" id="UP000000598">
    <property type="component" value="Chromosome F"/>
</dbReference>
<dbReference type="GO" id="GO:0005737">
    <property type="term" value="C:cytoplasm"/>
    <property type="evidence" value="ECO:0007669"/>
    <property type="project" value="UniProtKB-SubCell"/>
</dbReference>
<dbReference type="GO" id="GO:0003855">
    <property type="term" value="F:3-dehydroquinate dehydratase activity"/>
    <property type="evidence" value="ECO:0007669"/>
    <property type="project" value="UniProtKB-UniRule"/>
</dbReference>
<dbReference type="GO" id="GO:0003856">
    <property type="term" value="F:3-dehydroquinate synthase activity"/>
    <property type="evidence" value="ECO:0007669"/>
    <property type="project" value="UniProtKB-UniRule"/>
</dbReference>
<dbReference type="GO" id="GO:0003866">
    <property type="term" value="F:3-phosphoshikimate 1-carboxyvinyltransferase activity"/>
    <property type="evidence" value="ECO:0007669"/>
    <property type="project" value="UniProtKB-UniRule"/>
</dbReference>
<dbReference type="GO" id="GO:0005524">
    <property type="term" value="F:ATP binding"/>
    <property type="evidence" value="ECO:0007669"/>
    <property type="project" value="UniProtKB-UniRule"/>
</dbReference>
<dbReference type="GO" id="GO:0046872">
    <property type="term" value="F:metal ion binding"/>
    <property type="evidence" value="ECO:0007669"/>
    <property type="project" value="UniProtKB-UniRule"/>
</dbReference>
<dbReference type="GO" id="GO:0004764">
    <property type="term" value="F:shikimate 3-dehydrogenase (NADP+) activity"/>
    <property type="evidence" value="ECO:0007669"/>
    <property type="project" value="UniProtKB-UniRule"/>
</dbReference>
<dbReference type="GO" id="GO:0004765">
    <property type="term" value="F:shikimate kinase activity"/>
    <property type="evidence" value="ECO:0007669"/>
    <property type="project" value="UniProtKB-UniRule"/>
</dbReference>
<dbReference type="GO" id="GO:0008652">
    <property type="term" value="P:amino acid biosynthetic process"/>
    <property type="evidence" value="ECO:0007669"/>
    <property type="project" value="UniProtKB-KW"/>
</dbReference>
<dbReference type="GO" id="GO:0009073">
    <property type="term" value="P:aromatic amino acid family biosynthetic process"/>
    <property type="evidence" value="ECO:0007669"/>
    <property type="project" value="UniProtKB-UniRule"/>
</dbReference>
<dbReference type="GO" id="GO:0009423">
    <property type="term" value="P:chorismate biosynthetic process"/>
    <property type="evidence" value="ECO:0007669"/>
    <property type="project" value="UniProtKB-UniRule"/>
</dbReference>
<dbReference type="CDD" id="cd00502">
    <property type="entry name" value="DHQase_I"/>
    <property type="match status" value="1"/>
</dbReference>
<dbReference type="CDD" id="cd08195">
    <property type="entry name" value="DHQS"/>
    <property type="match status" value="1"/>
</dbReference>
<dbReference type="CDD" id="cd01556">
    <property type="entry name" value="EPSP_synthase"/>
    <property type="match status" value="1"/>
</dbReference>
<dbReference type="CDD" id="cd01065">
    <property type="entry name" value="NAD_bind_Shikimate_DH"/>
    <property type="match status" value="1"/>
</dbReference>
<dbReference type="CDD" id="cd00464">
    <property type="entry name" value="SK"/>
    <property type="match status" value="1"/>
</dbReference>
<dbReference type="FunFam" id="1.20.1090.10:FF:000007">
    <property type="entry name" value="Pentafunctional AROM polypeptide"/>
    <property type="match status" value="1"/>
</dbReference>
<dbReference type="FunFam" id="3.20.20.70:FF:000135">
    <property type="entry name" value="Pentafunctional AROM polypeptide"/>
    <property type="match status" value="1"/>
</dbReference>
<dbReference type="FunFam" id="3.40.50.1970:FF:000007">
    <property type="entry name" value="Pentafunctional AROM polypeptide"/>
    <property type="match status" value="1"/>
</dbReference>
<dbReference type="FunFam" id="3.40.50.300:FF:001256">
    <property type="entry name" value="Pentafunctional AROM polypeptide"/>
    <property type="match status" value="1"/>
</dbReference>
<dbReference type="FunFam" id="3.65.10.10:FF:000007">
    <property type="entry name" value="Pentafunctional AROM polypeptide"/>
    <property type="match status" value="1"/>
</dbReference>
<dbReference type="FunFam" id="3.65.10.10:FF:000008">
    <property type="entry name" value="Pentafunctional AROM polypeptide"/>
    <property type="match status" value="1"/>
</dbReference>
<dbReference type="Gene3D" id="3.40.50.1970">
    <property type="match status" value="1"/>
</dbReference>
<dbReference type="Gene3D" id="3.20.20.70">
    <property type="entry name" value="Aldolase class I"/>
    <property type="match status" value="1"/>
</dbReference>
<dbReference type="Gene3D" id="1.20.1090.10">
    <property type="entry name" value="Dehydroquinate synthase-like - alpha domain"/>
    <property type="match status" value="1"/>
</dbReference>
<dbReference type="Gene3D" id="3.65.10.10">
    <property type="entry name" value="Enolpyruvate transferase domain"/>
    <property type="match status" value="2"/>
</dbReference>
<dbReference type="Gene3D" id="3.40.50.10860">
    <property type="entry name" value="Leucine Dehydrogenase, chain A, domain 1"/>
    <property type="match status" value="1"/>
</dbReference>
<dbReference type="Gene3D" id="3.40.50.720">
    <property type="entry name" value="NAD(P)-binding Rossmann-like Domain"/>
    <property type="match status" value="1"/>
</dbReference>
<dbReference type="Gene3D" id="3.40.50.300">
    <property type="entry name" value="P-loop containing nucleotide triphosphate hydrolases"/>
    <property type="match status" value="1"/>
</dbReference>
<dbReference type="HAMAP" id="MF_00210">
    <property type="entry name" value="EPSP_synth"/>
    <property type="match status" value="1"/>
</dbReference>
<dbReference type="HAMAP" id="MF_03143">
    <property type="entry name" value="Pentafunct_AroM"/>
    <property type="match status" value="1"/>
</dbReference>
<dbReference type="HAMAP" id="MF_00109">
    <property type="entry name" value="Shikimate_kinase"/>
    <property type="match status" value="1"/>
</dbReference>
<dbReference type="InterPro" id="IPR018508">
    <property type="entry name" value="3-dehydroquinate_DH_AS"/>
</dbReference>
<dbReference type="InterPro" id="IPR013785">
    <property type="entry name" value="Aldolase_TIM"/>
</dbReference>
<dbReference type="InterPro" id="IPR046346">
    <property type="entry name" value="Aminoacid_DH-like_N_sf"/>
</dbReference>
<dbReference type="InterPro" id="IPR016037">
    <property type="entry name" value="DHQ_synth_AroB"/>
</dbReference>
<dbReference type="InterPro" id="IPR030960">
    <property type="entry name" value="DHQS/DOIS_N"/>
</dbReference>
<dbReference type="InterPro" id="IPR056179">
    <property type="entry name" value="DHQS_C"/>
</dbReference>
<dbReference type="InterPro" id="IPR001381">
    <property type="entry name" value="DHquinase_I"/>
</dbReference>
<dbReference type="InterPro" id="IPR001986">
    <property type="entry name" value="Enolpyruvate_Tfrase_dom"/>
</dbReference>
<dbReference type="InterPro" id="IPR036968">
    <property type="entry name" value="Enolpyruvate_Tfrase_sf"/>
</dbReference>
<dbReference type="InterPro" id="IPR006264">
    <property type="entry name" value="EPSP_synthase"/>
</dbReference>
<dbReference type="InterPro" id="IPR023193">
    <property type="entry name" value="EPSP_synthase_CS"/>
</dbReference>
<dbReference type="InterPro" id="IPR036291">
    <property type="entry name" value="NAD(P)-bd_dom_sf"/>
</dbReference>
<dbReference type="InterPro" id="IPR027417">
    <property type="entry name" value="P-loop_NTPase"/>
</dbReference>
<dbReference type="InterPro" id="IPR008289">
    <property type="entry name" value="Pentafunct_AroM"/>
</dbReference>
<dbReference type="InterPro" id="IPR013792">
    <property type="entry name" value="RNA3'P_cycl/enolpyr_Trfase_a/b"/>
</dbReference>
<dbReference type="InterPro" id="IPR041121">
    <property type="entry name" value="SDH_C"/>
</dbReference>
<dbReference type="InterPro" id="IPR031322">
    <property type="entry name" value="Shikimate/glucono_kinase"/>
</dbReference>
<dbReference type="InterPro" id="IPR013708">
    <property type="entry name" value="Shikimate_DH-bd_N"/>
</dbReference>
<dbReference type="InterPro" id="IPR010110">
    <property type="entry name" value="Shikimate_DH_AroM-type"/>
</dbReference>
<dbReference type="InterPro" id="IPR000623">
    <property type="entry name" value="Shikimate_kinase/TSH1"/>
</dbReference>
<dbReference type="InterPro" id="IPR023000">
    <property type="entry name" value="Shikimate_kinase_CS"/>
</dbReference>
<dbReference type="InterPro" id="IPR006151">
    <property type="entry name" value="Shikm_DH/Glu-tRNA_Rdtase"/>
</dbReference>
<dbReference type="NCBIfam" id="TIGR01356">
    <property type="entry name" value="aroA"/>
    <property type="match status" value="1"/>
</dbReference>
<dbReference type="NCBIfam" id="TIGR01357">
    <property type="entry name" value="aroB"/>
    <property type="match status" value="1"/>
</dbReference>
<dbReference type="NCBIfam" id="TIGR01093">
    <property type="entry name" value="aroD"/>
    <property type="match status" value="1"/>
</dbReference>
<dbReference type="NCBIfam" id="TIGR01809">
    <property type="entry name" value="Shik-DH-AROM"/>
    <property type="match status" value="1"/>
</dbReference>
<dbReference type="PANTHER" id="PTHR21090">
    <property type="entry name" value="AROM/DEHYDROQUINATE SYNTHASE"/>
    <property type="match status" value="1"/>
</dbReference>
<dbReference type="PANTHER" id="PTHR21090:SF5">
    <property type="entry name" value="PENTAFUNCTIONAL AROM POLYPEPTIDE"/>
    <property type="match status" value="1"/>
</dbReference>
<dbReference type="Pfam" id="PF01761">
    <property type="entry name" value="DHQ_synthase"/>
    <property type="match status" value="1"/>
</dbReference>
<dbReference type="Pfam" id="PF24621">
    <property type="entry name" value="DHQS_C"/>
    <property type="match status" value="1"/>
</dbReference>
<dbReference type="Pfam" id="PF01487">
    <property type="entry name" value="DHquinase_I"/>
    <property type="match status" value="1"/>
</dbReference>
<dbReference type="Pfam" id="PF00275">
    <property type="entry name" value="EPSP_synthase"/>
    <property type="match status" value="1"/>
</dbReference>
<dbReference type="Pfam" id="PF18317">
    <property type="entry name" value="SDH_C"/>
    <property type="match status" value="1"/>
</dbReference>
<dbReference type="Pfam" id="PF01488">
    <property type="entry name" value="Shikimate_DH"/>
    <property type="match status" value="1"/>
</dbReference>
<dbReference type="Pfam" id="PF08501">
    <property type="entry name" value="Shikimate_dh_N"/>
    <property type="match status" value="1"/>
</dbReference>
<dbReference type="Pfam" id="PF01202">
    <property type="entry name" value="SKI"/>
    <property type="match status" value="1"/>
</dbReference>
<dbReference type="PIRSF" id="PIRSF000514">
    <property type="entry name" value="Pentafunct_AroM"/>
    <property type="match status" value="1"/>
</dbReference>
<dbReference type="PRINTS" id="PR01100">
    <property type="entry name" value="SHIKIMTKNASE"/>
</dbReference>
<dbReference type="SUPFAM" id="SSF51569">
    <property type="entry name" value="Aldolase"/>
    <property type="match status" value="1"/>
</dbReference>
<dbReference type="SUPFAM" id="SSF53223">
    <property type="entry name" value="Aminoacid dehydrogenase-like, N-terminal domain"/>
    <property type="match status" value="1"/>
</dbReference>
<dbReference type="SUPFAM" id="SSF56796">
    <property type="entry name" value="Dehydroquinate synthase-like"/>
    <property type="match status" value="1"/>
</dbReference>
<dbReference type="SUPFAM" id="SSF55205">
    <property type="entry name" value="EPT/RTPC-like"/>
    <property type="match status" value="1"/>
</dbReference>
<dbReference type="SUPFAM" id="SSF51735">
    <property type="entry name" value="NAD(P)-binding Rossmann-fold domains"/>
    <property type="match status" value="1"/>
</dbReference>
<dbReference type="SUPFAM" id="SSF52540">
    <property type="entry name" value="P-loop containing nucleoside triphosphate hydrolases"/>
    <property type="match status" value="1"/>
</dbReference>
<dbReference type="PROSITE" id="PS01028">
    <property type="entry name" value="DEHYDROQUINASE_I"/>
    <property type="match status" value="1"/>
</dbReference>
<dbReference type="PROSITE" id="PS00104">
    <property type="entry name" value="EPSP_SYNTHASE_1"/>
    <property type="match status" value="1"/>
</dbReference>
<dbReference type="PROSITE" id="PS00885">
    <property type="entry name" value="EPSP_SYNTHASE_2"/>
    <property type="match status" value="1"/>
</dbReference>
<dbReference type="PROSITE" id="PS01128">
    <property type="entry name" value="SHIKIMATE_KINASE"/>
    <property type="match status" value="1"/>
</dbReference>
<gene>
    <name evidence="1" type="primary">ARO1</name>
    <name type="ordered locus">KLLA0F19712g</name>
</gene>
<reference key="1">
    <citation type="journal article" date="2004" name="Nature">
        <title>Genome evolution in yeasts.</title>
        <authorList>
            <person name="Dujon B."/>
            <person name="Sherman D."/>
            <person name="Fischer G."/>
            <person name="Durrens P."/>
            <person name="Casaregola S."/>
            <person name="Lafontaine I."/>
            <person name="de Montigny J."/>
            <person name="Marck C."/>
            <person name="Neuveglise C."/>
            <person name="Talla E."/>
            <person name="Goffard N."/>
            <person name="Frangeul L."/>
            <person name="Aigle M."/>
            <person name="Anthouard V."/>
            <person name="Babour A."/>
            <person name="Barbe V."/>
            <person name="Barnay S."/>
            <person name="Blanchin S."/>
            <person name="Beckerich J.-M."/>
            <person name="Beyne E."/>
            <person name="Bleykasten C."/>
            <person name="Boisrame A."/>
            <person name="Boyer J."/>
            <person name="Cattolico L."/>
            <person name="Confanioleri F."/>
            <person name="de Daruvar A."/>
            <person name="Despons L."/>
            <person name="Fabre E."/>
            <person name="Fairhead C."/>
            <person name="Ferry-Dumazet H."/>
            <person name="Groppi A."/>
            <person name="Hantraye F."/>
            <person name="Hennequin C."/>
            <person name="Jauniaux N."/>
            <person name="Joyet P."/>
            <person name="Kachouri R."/>
            <person name="Kerrest A."/>
            <person name="Koszul R."/>
            <person name="Lemaire M."/>
            <person name="Lesur I."/>
            <person name="Ma L."/>
            <person name="Muller H."/>
            <person name="Nicaud J.-M."/>
            <person name="Nikolski M."/>
            <person name="Oztas S."/>
            <person name="Ozier-Kalogeropoulos O."/>
            <person name="Pellenz S."/>
            <person name="Potier S."/>
            <person name="Richard G.-F."/>
            <person name="Straub M.-L."/>
            <person name="Suleau A."/>
            <person name="Swennen D."/>
            <person name="Tekaia F."/>
            <person name="Wesolowski-Louvel M."/>
            <person name="Westhof E."/>
            <person name="Wirth B."/>
            <person name="Zeniou-Meyer M."/>
            <person name="Zivanovic Y."/>
            <person name="Bolotin-Fukuhara M."/>
            <person name="Thierry A."/>
            <person name="Bouchier C."/>
            <person name="Caudron B."/>
            <person name="Scarpelli C."/>
            <person name="Gaillardin C."/>
            <person name="Weissenbach J."/>
            <person name="Wincker P."/>
            <person name="Souciet J.-L."/>
        </authorList>
    </citation>
    <scope>NUCLEOTIDE SEQUENCE [LARGE SCALE GENOMIC DNA]</scope>
    <source>
        <strain>ATCC 8585 / CBS 2359 / DSM 70799 / NBRC 1267 / NRRL Y-1140 / WM37</strain>
    </source>
</reference>
<sequence length="1578" mass="173789">MSVELAKVSILGKECVHVGYQIHEHIVKSTLEHCKSSTYVIINDTNVSKVPYYHDLVSLFEKSLPEGSRLLRYDVKPGEAHKSRETKADIEDYLLLEGCTRDTVIIAVGGGVIGDMIGFVASTFMRGVRVIQVPTSLLAMVDSSIGGKTAVDTPLGKNFVGAFWQPQFVFVDIKWLETLPQREFINGIAEVIKTACIWNGEEFARLEANAETFLSVVNNSQTVSVFSPHHNETVELTYTNIESMLEHTYKLVLESIKVKAHVVSSDERESGLRNLLNFGHTIGHAYEAILTPQALHGECVSIGMVKEAELSRYMNILSATQVARMVKILAAYGLPISVNEKWFKELTLNKKTPLDVLLKKMSIDKKNDGSKKKVVILEKIGKCYGTSAHVVSDEDLRFVLSDETLVHPFNNIPEGQNKVITPPGSKSISNRALILAALGKGTCKIKNLLHSDDTKHMLNAVQQLKGATISWEDDGETVVVHGQGGSTLTAPSEALYLGNAGTASRFLTTVAALAKKDGKNDHVILTGNARMQERPIGPLVDSLRSNGLKIDYLNRQGSLPLKINTETNFKGGKIELAATVSSQYVSSILMCAPYAEEPVTLSLIGGKPISQLYVDMTIKMMDAFGIKVTTSTTEPFTYHIPKGNYINPAEYTIESDASSATYPLSFAAITGTTVTVPNIGSASLQGDARFAVDVLRPMGCEVTQTATSTTVTGPPRGQLKPLKHVDMEPMTDAFLTASVVAAICNNGTTNTTTIEGIANQRVKECNRIEAMVTQLAKFGVRANELPDGIQIHGVNSISELRQPSDAGIETYDDHRVAMSFSLLAGMVNSDKKDDESSVRILERQCTGKTWPGWWDVLHSQLGARLDGAEPSTTKSSEVKKSVVIIGMRAAGKSTVSKWCAESLGYRLLDLDEEFERQYGKGTVKDFVAESGWDEFRKEETRIFQEAVDKYGDKGYVLSSGGGIVERSESRQALKRFAESGGIVLHLHRDIEETIVFLKSDPTRPAYIEEIRDVWERREKWYHECSNFTFFAAHCSNEIEFRNLRHVFSNFIRRVLGAEKIPVPSRRSAFVCLTFEDLSDHLSKLDEITYGCEAVELRVDHLSSFSSDFVTKQISLLRAATKSLPIVFTVRTVSQGGKFQDDDYDLLESLLKVALKNAVEYIDLELTLPNNILYNVLNKKSNTKIIGSHHDFAAKFPWDDAEWENRYNQALSLDVDIVKFVGTAVSFDDNLALEKFRSTHTLKPLIAINMTETGKLSRVLNNILTPVTSKLLPSAAAPGQLTLAEINQLYHQIGGLPAKKFFVIGSPIGHSRSPILHNTGYELLGLPHHFDKFETEDIEVVKKELLTREDLGGLAVTIPLKLDIIDSMFELSEAAKTIGAVNTVIPLGKNKFRGDNTDWLGIKNSLVSNGVPSSVSGSAGLIIGAGGTSRAAIYALKQIGCDTIYMLNRTTEKLQKLKSEFSEEYKIVVVESAEQTESIKEQVSVAVSCVPADKPLDPELLNKLERLLAKGTNSSFKPTLLDAAYKPSVTPIMKLARDKFNWNIVPGAEMLVHQGVEQFSKWTGAKPPFKAIFDAVTQE</sequence>
<keyword id="KW-0028">Amino-acid biosynthesis</keyword>
<keyword id="KW-0057">Aromatic amino acid biosynthesis</keyword>
<keyword id="KW-0067">ATP-binding</keyword>
<keyword id="KW-0963">Cytoplasm</keyword>
<keyword id="KW-0418">Kinase</keyword>
<keyword id="KW-0456">Lyase</keyword>
<keyword id="KW-0479">Metal-binding</keyword>
<keyword id="KW-0511">Multifunctional enzyme</keyword>
<keyword id="KW-0521">NADP</keyword>
<keyword id="KW-0547">Nucleotide-binding</keyword>
<keyword id="KW-0560">Oxidoreductase</keyword>
<keyword id="KW-1185">Reference proteome</keyword>
<keyword id="KW-0808">Transferase</keyword>
<keyword id="KW-0862">Zinc</keyword>
<proteinExistence type="inferred from homology"/>
<feature type="chain" id="PRO_0000406717" description="Pentafunctional AROM polypeptide">
    <location>
        <begin position="1"/>
        <end position="1578"/>
    </location>
</feature>
<feature type="region of interest" description="3-dehydroquinate synthase">
    <location>
        <begin position="1"/>
        <end position="393"/>
    </location>
</feature>
<feature type="region of interest" description="EPSP synthase">
    <location>
        <begin position="406"/>
        <end position="863"/>
    </location>
</feature>
<feature type="region of interest" description="Shikimate kinase">
    <location>
        <begin position="882"/>
        <end position="1071"/>
    </location>
</feature>
<feature type="region of interest" description="3-dehydroquinase">
    <location>
        <begin position="1072"/>
        <end position="1284"/>
    </location>
</feature>
<feature type="region of interest" description="Shikimate dehydrogenase">
    <location>
        <begin position="1297"/>
        <end position="1578"/>
    </location>
</feature>
<feature type="active site" description="Proton acceptor; for 3-dehydroquinate synthase activity" evidence="1">
    <location>
        <position position="269"/>
    </location>
</feature>
<feature type="active site" description="Proton acceptor; for 3-dehydroquinate synthase activity" evidence="1">
    <location>
        <position position="284"/>
    </location>
</feature>
<feature type="active site" description="For EPSP synthase activity" evidence="1">
    <location>
        <position position="845"/>
    </location>
</feature>
<feature type="active site" description="Proton acceptor; for 3-dehydroquinate dehydratase activity" evidence="1">
    <location>
        <position position="1189"/>
    </location>
</feature>
<feature type="active site" description="Schiff-base intermediate with substrate; for 3-dehydroquinate dehydratase activity" evidence="1">
    <location>
        <position position="1218"/>
    </location>
</feature>
<feature type="binding site" evidence="1">
    <location>
        <begin position="44"/>
        <end position="46"/>
    </location>
    <ligand>
        <name>NAD(+)</name>
        <dbReference type="ChEBI" id="CHEBI:57540"/>
    </ligand>
</feature>
<feature type="binding site" evidence="1">
    <location>
        <begin position="79"/>
        <end position="82"/>
    </location>
    <ligand>
        <name>NAD(+)</name>
        <dbReference type="ChEBI" id="CHEBI:57540"/>
    </ligand>
</feature>
<feature type="binding site" evidence="1">
    <location>
        <begin position="110"/>
        <end position="112"/>
    </location>
    <ligand>
        <name>NAD(+)</name>
        <dbReference type="ChEBI" id="CHEBI:57540"/>
    </ligand>
</feature>
<feature type="binding site" evidence="1">
    <location>
        <position position="115"/>
    </location>
    <ligand>
        <name>NAD(+)</name>
        <dbReference type="ChEBI" id="CHEBI:57540"/>
    </ligand>
</feature>
<feature type="binding site" evidence="1">
    <location>
        <position position="126"/>
    </location>
    <ligand>
        <name>7-phospho-2-dehydro-3-deoxy-D-arabino-heptonate</name>
        <dbReference type="ChEBI" id="CHEBI:58394"/>
    </ligand>
</feature>
<feature type="binding site" evidence="1">
    <location>
        <begin position="135"/>
        <end position="136"/>
    </location>
    <ligand>
        <name>NAD(+)</name>
        <dbReference type="ChEBI" id="CHEBI:57540"/>
    </ligand>
</feature>
<feature type="binding site" evidence="1">
    <location>
        <position position="142"/>
    </location>
    <ligand>
        <name>7-phospho-2-dehydro-3-deoxy-D-arabino-heptonate</name>
        <dbReference type="ChEBI" id="CHEBI:58394"/>
    </ligand>
</feature>
<feature type="binding site" evidence="1">
    <location>
        <position position="148"/>
    </location>
    <ligand>
        <name>7-phospho-2-dehydro-3-deoxy-D-arabino-heptonate</name>
        <dbReference type="ChEBI" id="CHEBI:58394"/>
    </ligand>
</feature>
<feature type="binding site" evidence="1">
    <location>
        <position position="157"/>
    </location>
    <ligand>
        <name>NAD(+)</name>
        <dbReference type="ChEBI" id="CHEBI:57540"/>
    </ligand>
</feature>
<feature type="binding site" evidence="1">
    <location>
        <position position="158"/>
    </location>
    <ligand>
        <name>7-phospho-2-dehydro-3-deoxy-D-arabino-heptonate</name>
        <dbReference type="ChEBI" id="CHEBI:58394"/>
    </ligand>
</feature>
<feature type="binding site" evidence="1">
    <location>
        <begin position="175"/>
        <end position="178"/>
    </location>
    <ligand>
        <name>NAD(+)</name>
        <dbReference type="ChEBI" id="CHEBI:57540"/>
    </ligand>
</feature>
<feature type="binding site" evidence="1">
    <location>
        <position position="186"/>
    </location>
    <ligand>
        <name>NAD(+)</name>
        <dbReference type="ChEBI" id="CHEBI:57540"/>
    </ligand>
</feature>
<feature type="binding site" evidence="1">
    <location>
        <begin position="190"/>
        <end position="193"/>
    </location>
    <ligand>
        <name>7-phospho-2-dehydro-3-deoxy-D-arabino-heptonate</name>
        <dbReference type="ChEBI" id="CHEBI:58394"/>
    </ligand>
</feature>
<feature type="binding site" evidence="1">
    <location>
        <position position="190"/>
    </location>
    <ligand>
        <name>Zn(2+)</name>
        <dbReference type="ChEBI" id="CHEBI:29105"/>
        <note>catalytic</note>
    </ligand>
</feature>
<feature type="binding site" evidence="1">
    <location>
        <position position="259"/>
    </location>
    <ligand>
        <name>7-phospho-2-dehydro-3-deoxy-D-arabino-heptonate</name>
        <dbReference type="ChEBI" id="CHEBI:58394"/>
    </ligand>
</feature>
<feature type="binding site" evidence="1">
    <location>
        <begin position="273"/>
        <end position="277"/>
    </location>
    <ligand>
        <name>7-phospho-2-dehydro-3-deoxy-D-arabino-heptonate</name>
        <dbReference type="ChEBI" id="CHEBI:58394"/>
    </ligand>
</feature>
<feature type="binding site" evidence="1">
    <location>
        <position position="280"/>
    </location>
    <ligand>
        <name>7-phospho-2-dehydro-3-deoxy-D-arabino-heptonate</name>
        <dbReference type="ChEBI" id="CHEBI:58394"/>
    </ligand>
</feature>
<feature type="binding site" evidence="1">
    <location>
        <position position="280"/>
    </location>
    <ligand>
        <name>Zn(2+)</name>
        <dbReference type="ChEBI" id="CHEBI:29105"/>
        <note>catalytic</note>
    </ligand>
</feature>
<feature type="binding site" evidence="1">
    <location>
        <position position="296"/>
    </location>
    <ligand>
        <name>7-phospho-2-dehydro-3-deoxy-D-arabino-heptonate</name>
        <dbReference type="ChEBI" id="CHEBI:58394"/>
    </ligand>
</feature>
<feature type="binding site" evidence="1">
    <location>
        <position position="296"/>
    </location>
    <ligand>
        <name>Zn(2+)</name>
        <dbReference type="ChEBI" id="CHEBI:29105"/>
        <note>catalytic</note>
    </ligand>
</feature>
<feature type="binding site" evidence="1">
    <location>
        <position position="365"/>
    </location>
    <ligand>
        <name>7-phospho-2-dehydro-3-deoxy-D-arabino-heptonate</name>
        <dbReference type="ChEBI" id="CHEBI:58394"/>
    </ligand>
</feature>
<feature type="binding site" evidence="1">
    <location>
        <begin position="886"/>
        <end position="893"/>
    </location>
    <ligand>
        <name>ATP</name>
        <dbReference type="ChEBI" id="CHEBI:30616"/>
    </ligand>
</feature>
<evidence type="ECO:0000255" key="1">
    <source>
        <dbReference type="HAMAP-Rule" id="MF_03143"/>
    </source>
</evidence>